<name>LZIC_DANRE</name>
<accession>Q6DHH7</accession>
<accession>Q4PS89</accession>
<protein>
    <recommendedName>
        <fullName>Protein LZIC</fullName>
    </recommendedName>
    <alternativeName>
        <fullName>Leucine zipper and CTNNBIP1 domain-containing protein</fullName>
    </alternativeName>
    <alternativeName>
        <fullName>Leucine zipper and ICAT homologous domain-containing protein</fullName>
    </alternativeName>
</protein>
<organism>
    <name type="scientific">Danio rerio</name>
    <name type="common">Zebrafish</name>
    <name type="synonym">Brachydanio rerio</name>
    <dbReference type="NCBI Taxonomy" id="7955"/>
    <lineage>
        <taxon>Eukaryota</taxon>
        <taxon>Metazoa</taxon>
        <taxon>Chordata</taxon>
        <taxon>Craniata</taxon>
        <taxon>Vertebrata</taxon>
        <taxon>Euteleostomi</taxon>
        <taxon>Actinopterygii</taxon>
        <taxon>Neopterygii</taxon>
        <taxon>Teleostei</taxon>
        <taxon>Ostariophysi</taxon>
        <taxon>Cypriniformes</taxon>
        <taxon>Danionidae</taxon>
        <taxon>Danioninae</taxon>
        <taxon>Danio</taxon>
    </lineage>
</organism>
<reference key="1">
    <citation type="journal article" date="2005" name="Dev. Biol.">
        <title>LZIC regulates neuronal survival during zebrafish development.</title>
        <authorList>
            <person name="Clements W.K."/>
            <person name="Kimelman D."/>
        </authorList>
    </citation>
    <scope>NUCLEOTIDE SEQUENCE [MRNA]</scope>
    <scope>LACK OF INTERACTION WITH CTNNB1</scope>
    <scope>DEVELOPMENTAL STAGE</scope>
    <scope>FUNCTION</scope>
</reference>
<reference key="2">
    <citation type="submission" date="2004-07" db="EMBL/GenBank/DDBJ databases">
        <authorList>
            <consortium name="NIH - Zebrafish Gene Collection (ZGC) project"/>
        </authorList>
    </citation>
    <scope>NUCLEOTIDE SEQUENCE [LARGE SCALE MRNA]</scope>
</reference>
<evidence type="ECO:0000255" key="1"/>
<evidence type="ECO:0000269" key="2">
    <source>
    </source>
</evidence>
<evidence type="ECO:0000305" key="3"/>
<feature type="chain" id="PRO_0000263695" description="Protein LZIC">
    <location>
        <begin position="1"/>
        <end position="190"/>
    </location>
</feature>
<feature type="coiled-coil region" evidence="1">
    <location>
        <begin position="6"/>
        <end position="64"/>
    </location>
</feature>
<feature type="sequence conflict" description="In Ref. 1; AAY67864." evidence="3" ref="1">
    <original>D</original>
    <variation>E</variation>
    <location>
        <position position="58"/>
    </location>
</feature>
<sequence length="190" mass="21322">MASRGKSETSKLRQNMEEQLDRLMQQLQDLEECREDLEEEEYEETKKETLEQLSEFNDSLKKLMSGNMTLVDELGGMQLAIQAAISQAFKTPEVIRLFAKKQPGQLRTRLAEMDRDVMVGKLSRDVFTQQKVEILTALRKLGEKLTTEDEAFLAANASATLSHFEKVTASLGSEDKIMALASSGVGKTQT</sequence>
<proteinExistence type="evidence at protein level"/>
<dbReference type="EMBL" id="DQ058007">
    <property type="protein sequence ID" value="AAY67864.1"/>
    <property type="molecule type" value="mRNA"/>
</dbReference>
<dbReference type="EMBL" id="BC075997">
    <property type="protein sequence ID" value="AAH75997.1"/>
    <property type="molecule type" value="mRNA"/>
</dbReference>
<dbReference type="RefSeq" id="NP_001002598.1">
    <property type="nucleotide sequence ID" value="NM_001002598.1"/>
</dbReference>
<dbReference type="SMR" id="Q6DHH7"/>
<dbReference type="FunCoup" id="Q6DHH7">
    <property type="interactions" value="1625"/>
</dbReference>
<dbReference type="STRING" id="7955.ENSDARP00000072766"/>
<dbReference type="PaxDb" id="7955-ENSDARP00000072766"/>
<dbReference type="Ensembl" id="ENSDART00000078304">
    <property type="protein sequence ID" value="ENSDARP00000072766"/>
    <property type="gene ID" value="ENSDARG00000055899"/>
</dbReference>
<dbReference type="Ensembl" id="ENSDART00000193192">
    <property type="protein sequence ID" value="ENSDARP00000152932"/>
    <property type="gene ID" value="ENSDARG00000055899"/>
</dbReference>
<dbReference type="GeneID" id="436871"/>
<dbReference type="KEGG" id="dre:436871"/>
<dbReference type="AGR" id="ZFIN:ZDB-GENE-040718-342"/>
<dbReference type="CTD" id="84328"/>
<dbReference type="ZFIN" id="ZDB-GENE-040718-342">
    <property type="gene designation" value="lzic"/>
</dbReference>
<dbReference type="eggNOG" id="ENOG502QPUB">
    <property type="taxonomic scope" value="Eukaryota"/>
</dbReference>
<dbReference type="HOGENOM" id="CLU_091171_0_0_1"/>
<dbReference type="InParanoid" id="Q6DHH7"/>
<dbReference type="OMA" id="TKMMAGN"/>
<dbReference type="OrthoDB" id="10262856at2759"/>
<dbReference type="PhylomeDB" id="Q6DHH7"/>
<dbReference type="TreeFam" id="TF314533"/>
<dbReference type="PRO" id="PR:Q6DHH7"/>
<dbReference type="Proteomes" id="UP000000437">
    <property type="component" value="Chromosome 23"/>
</dbReference>
<dbReference type="Bgee" id="ENSDARG00000055899">
    <property type="expression patterns" value="Expressed in brain and 34 other cell types or tissues"/>
</dbReference>
<dbReference type="GO" id="GO:0008013">
    <property type="term" value="F:beta-catenin binding"/>
    <property type="evidence" value="ECO:0007669"/>
    <property type="project" value="InterPro"/>
</dbReference>
<dbReference type="GO" id="GO:0030154">
    <property type="term" value="P:cell differentiation"/>
    <property type="evidence" value="ECO:0007669"/>
    <property type="project" value="UniProtKB-KW"/>
</dbReference>
<dbReference type="GO" id="GO:0007417">
    <property type="term" value="P:central nervous system development"/>
    <property type="evidence" value="ECO:0000315"/>
    <property type="project" value="ZFIN"/>
</dbReference>
<dbReference type="Gene3D" id="1.10.10.490">
    <property type="entry name" value="Beta-catenin-interacting ICAT"/>
    <property type="match status" value="1"/>
</dbReference>
<dbReference type="InterPro" id="IPR009428">
    <property type="entry name" value="ICAT_dom"/>
</dbReference>
<dbReference type="InterPro" id="IPR036911">
    <property type="entry name" value="ICAT_sf"/>
</dbReference>
<dbReference type="InterPro" id="IPR040065">
    <property type="entry name" value="LZIC"/>
</dbReference>
<dbReference type="PANTHER" id="PTHR16505">
    <property type="entry name" value="PROTEIN LZIC"/>
    <property type="match status" value="1"/>
</dbReference>
<dbReference type="PANTHER" id="PTHR16505:SF8">
    <property type="entry name" value="PROTEIN LZIC"/>
    <property type="match status" value="1"/>
</dbReference>
<dbReference type="Pfam" id="PF06384">
    <property type="entry name" value="ICAT"/>
    <property type="match status" value="1"/>
</dbReference>
<dbReference type="SUPFAM" id="SSF81730">
    <property type="entry name" value="beta-catenin-interacting protein ICAT"/>
    <property type="match status" value="1"/>
</dbReference>
<gene>
    <name type="primary">lzic</name>
    <name type="ORF">zgc:92310</name>
</gene>
<comment type="function">
    <text evidence="2">Required for neuronal survival during early development.</text>
</comment>
<comment type="subunit">
    <text>Does not interact with CTNNB1.</text>
</comment>
<comment type="developmental stage">
    <text evidence="2">Expressed very early in development. Expression levels drop until shield stage and increase again during gastrulation and later development. Expressed abundantly in the developing brain, and at lower levels throughout the embryo.</text>
</comment>
<comment type="similarity">
    <text evidence="3">Belongs to the CTNNBIP1 family.</text>
</comment>
<keyword id="KW-0175">Coiled coil</keyword>
<keyword id="KW-0217">Developmental protein</keyword>
<keyword id="KW-0221">Differentiation</keyword>
<keyword id="KW-0524">Neurogenesis</keyword>
<keyword id="KW-1185">Reference proteome</keyword>